<organism evidence="7">
    <name type="scientific">Clupea harengus</name>
    <name type="common">Atlantic herring</name>
    <dbReference type="NCBI Taxonomy" id="7950"/>
    <lineage>
        <taxon>Eukaryota</taxon>
        <taxon>Metazoa</taxon>
        <taxon>Chordata</taxon>
        <taxon>Craniata</taxon>
        <taxon>Vertebrata</taxon>
        <taxon>Euteleostomi</taxon>
        <taxon>Actinopterygii</taxon>
        <taxon>Neopterygii</taxon>
        <taxon>Teleostei</taxon>
        <taxon>Clupei</taxon>
        <taxon>Clupeiformes</taxon>
        <taxon>Clupeoidei</taxon>
        <taxon>Clupeidae</taxon>
        <taxon>Clupea</taxon>
    </lineage>
</organism>
<name>CATD_CLUHA</name>
<comment type="function">
    <text>Acid protease active in intracellular protein breakdown.</text>
</comment>
<comment type="catalytic activity">
    <reaction evidence="5">
        <text>Specificity similar to, but narrower than, that of pepsin A. Does not cleave the 4-Gln-|-His-5 bond in B chain of insulin.</text>
        <dbReference type="EC" id="3.4.23.5"/>
    </reaction>
</comment>
<comment type="activity regulation">
    <text evidence="5">Inhibited by pepstatin.</text>
</comment>
<comment type="biophysicochemical properties">
    <phDependence>
        <text>Optimum pH is 2.5 with hemoglobin as substrate.</text>
    </phDependence>
    <temperatureDependence>
        <text>Optimum temperature is 37 degrees Celsius.</text>
    </temperatureDependence>
</comment>
<comment type="subunit">
    <text evidence="5">Monomer.</text>
</comment>
<comment type="subcellular location">
    <subcellularLocation>
        <location>Lysosome</location>
    </subcellularLocation>
</comment>
<comment type="similarity">
    <text evidence="6">Belongs to the peptidase A1 family.</text>
</comment>
<accession>Q9DEX3</accession>
<protein>
    <recommendedName>
        <fullName>Cathepsin D</fullName>
        <ecNumber>3.4.23.5</ecNumber>
    </recommendedName>
</protein>
<evidence type="ECO:0000250" key="1"/>
<evidence type="ECO:0000255" key="2"/>
<evidence type="ECO:0000255" key="3">
    <source>
        <dbReference type="PROSITE-ProRule" id="PRU01103"/>
    </source>
</evidence>
<evidence type="ECO:0000255" key="4">
    <source>
        <dbReference type="PROSITE-ProRule" id="PRU10094"/>
    </source>
</evidence>
<evidence type="ECO:0000269" key="5">
    <source>
    </source>
</evidence>
<evidence type="ECO:0000305" key="6"/>
<evidence type="ECO:0000312" key="7">
    <source>
        <dbReference type="EMBL" id="AAG27733.1"/>
    </source>
</evidence>
<feature type="signal peptide" evidence="2">
    <location>
        <begin position="1"/>
        <end position="18"/>
    </location>
</feature>
<feature type="propeptide" id="PRO_0000025970" description="Activation peptide" evidence="5">
    <location>
        <begin position="19"/>
        <end position="61"/>
    </location>
</feature>
<feature type="chain" id="PRO_0000025971" description="Cathepsin D">
    <location>
        <begin position="62"/>
        <end position="396"/>
    </location>
</feature>
<feature type="domain" description="Peptidase A1" evidence="3">
    <location>
        <begin position="76"/>
        <end position="393"/>
    </location>
</feature>
<feature type="active site" evidence="4">
    <location>
        <position position="94"/>
    </location>
</feature>
<feature type="active site" evidence="4">
    <location>
        <position position="281"/>
    </location>
</feature>
<feature type="glycosylation site" description="N-linked (GlcNAc...) asparagine" evidence="2">
    <location>
        <position position="131"/>
    </location>
</feature>
<feature type="disulfide bond" evidence="1">
    <location>
        <begin position="107"/>
        <end position="114"/>
    </location>
</feature>
<feature type="disulfide bond" evidence="1">
    <location>
        <begin position="272"/>
        <end position="276"/>
    </location>
</feature>
<feature type="disulfide bond" evidence="1">
    <location>
        <begin position="315"/>
        <end position="352"/>
    </location>
</feature>
<reference evidence="7" key="1">
    <citation type="submission" date="2000-10" db="EMBL/GenBank/DDBJ databases">
        <title>Cloning and sequence determination of herring muscle cathepsin D.</title>
        <authorList>
            <person name="Nielsen L.B."/>
            <person name="Stougaard P."/>
            <person name="Andersen P.S."/>
            <person name="Pedersen L.H."/>
        </authorList>
    </citation>
    <scope>NUCLEOTIDE SEQUENCE [MRNA]</scope>
</reference>
<reference evidence="6" key="2">
    <citation type="journal article" date="2001" name="Comp. Biochem. Physiol.">
        <title>Purification and characterization of cathepsin D from herring muscle (Clupea harengus).</title>
        <authorList>
            <person name="Nielsen L.B."/>
            <person name="Nielsen H.H."/>
        </authorList>
    </citation>
    <scope>PROTEIN SEQUENCE OF 62-82</scope>
    <source>
        <tissue>Skeletal muscle</tissue>
    </source>
</reference>
<proteinExistence type="evidence at protein level"/>
<sequence>MKFLYLFLFAVFAWTSDAIVRIPLKKFRSIRRTLSDSGLNVEQLLAGTNSLQHNQGFPSSNAPTPETLKNYMDAQYYGEIGLGTPVQMFTVVFDTGSSNLWLPSIHCSFTDIACLLHHKYNGAKSSTYVKNGTEFAIQYGSGSLSGYLSQDSCTIGDIVVEKQLFGEAIKQPGVAFIAAKFDGILGMAYPRISVDGVPPVFDMMMSQKKVEQNVFSFYLNRNPDTEPGGELLLGGTDPKYYTGDFNYVPVTRQAYWQIHMDGMSIGSQLTLCKDGCEAIVDTGTSLITGPPAEVRALQKAIGAIPLIQGEYMIDCKKVPTLPTISFNVGGKTYSLTGEQYVLKESQGGKTICLSGLMGLEIPPPAGPLWILGDVFIGQYYTVFDRESNRVGFAKST</sequence>
<dbReference type="EC" id="3.4.23.5"/>
<dbReference type="EMBL" id="AF312364">
    <property type="protein sequence ID" value="AAG27733.1"/>
    <property type="molecule type" value="mRNA"/>
</dbReference>
<dbReference type="RefSeq" id="NP_001296757.1">
    <property type="nucleotide sequence ID" value="NM_001309828.1"/>
</dbReference>
<dbReference type="SMR" id="Q9DEX3"/>
<dbReference type="MEROPS" id="A01.009"/>
<dbReference type="GlyCosmos" id="Q9DEX3">
    <property type="glycosylation" value="1 site, No reported glycans"/>
</dbReference>
<dbReference type="GeneID" id="105898046"/>
<dbReference type="KEGG" id="char:105898046"/>
<dbReference type="CTD" id="1509"/>
<dbReference type="OrthoDB" id="771136at2759"/>
<dbReference type="BRENDA" id="3.4.23.5">
    <property type="organism ID" value="1542"/>
</dbReference>
<dbReference type="Proteomes" id="UP000515152">
    <property type="component" value="Chromosome 3"/>
</dbReference>
<dbReference type="GO" id="GO:0005764">
    <property type="term" value="C:lysosome"/>
    <property type="evidence" value="ECO:0007669"/>
    <property type="project" value="UniProtKB-SubCell"/>
</dbReference>
<dbReference type="GO" id="GO:0004190">
    <property type="term" value="F:aspartic-type endopeptidase activity"/>
    <property type="evidence" value="ECO:0007669"/>
    <property type="project" value="UniProtKB-KW"/>
</dbReference>
<dbReference type="GO" id="GO:0006508">
    <property type="term" value="P:proteolysis"/>
    <property type="evidence" value="ECO:0007669"/>
    <property type="project" value="UniProtKB-KW"/>
</dbReference>
<dbReference type="CDD" id="cd05490">
    <property type="entry name" value="Cathepsin_D2"/>
    <property type="match status" value="1"/>
</dbReference>
<dbReference type="FunFam" id="2.40.70.10:FF:000009">
    <property type="entry name" value="Aspartic proteinase A1"/>
    <property type="match status" value="1"/>
</dbReference>
<dbReference type="FunFam" id="2.40.70.10:FF:000066">
    <property type="entry name" value="Napsin A aspartic peptidase"/>
    <property type="match status" value="1"/>
</dbReference>
<dbReference type="Gene3D" id="2.40.70.10">
    <property type="entry name" value="Acid Proteases"/>
    <property type="match status" value="2"/>
</dbReference>
<dbReference type="InterPro" id="IPR001461">
    <property type="entry name" value="Aspartic_peptidase_A1"/>
</dbReference>
<dbReference type="InterPro" id="IPR001969">
    <property type="entry name" value="Aspartic_peptidase_AS"/>
</dbReference>
<dbReference type="InterPro" id="IPR012848">
    <property type="entry name" value="Aspartic_peptidase_N"/>
</dbReference>
<dbReference type="InterPro" id="IPR033144">
    <property type="entry name" value="Cathepsin_D"/>
</dbReference>
<dbReference type="InterPro" id="IPR033121">
    <property type="entry name" value="PEPTIDASE_A1"/>
</dbReference>
<dbReference type="InterPro" id="IPR021109">
    <property type="entry name" value="Peptidase_aspartic_dom_sf"/>
</dbReference>
<dbReference type="PANTHER" id="PTHR47966">
    <property type="entry name" value="BETA-SITE APP-CLEAVING ENZYME, ISOFORM A-RELATED"/>
    <property type="match status" value="1"/>
</dbReference>
<dbReference type="PANTHER" id="PTHR47966:SF42">
    <property type="entry name" value="CATHEPSIN D"/>
    <property type="match status" value="1"/>
</dbReference>
<dbReference type="Pfam" id="PF07966">
    <property type="entry name" value="A1_Propeptide"/>
    <property type="match status" value="1"/>
</dbReference>
<dbReference type="Pfam" id="PF00026">
    <property type="entry name" value="Asp"/>
    <property type="match status" value="1"/>
</dbReference>
<dbReference type="PRINTS" id="PR00792">
    <property type="entry name" value="PEPSIN"/>
</dbReference>
<dbReference type="SUPFAM" id="SSF50630">
    <property type="entry name" value="Acid proteases"/>
    <property type="match status" value="1"/>
</dbReference>
<dbReference type="PROSITE" id="PS00141">
    <property type="entry name" value="ASP_PROTEASE"/>
    <property type="match status" value="2"/>
</dbReference>
<dbReference type="PROSITE" id="PS51767">
    <property type="entry name" value="PEPTIDASE_A1"/>
    <property type="match status" value="1"/>
</dbReference>
<keyword id="KW-0064">Aspartyl protease</keyword>
<keyword id="KW-0903">Direct protein sequencing</keyword>
<keyword id="KW-1015">Disulfide bond</keyword>
<keyword id="KW-0325">Glycoprotein</keyword>
<keyword id="KW-0378">Hydrolase</keyword>
<keyword id="KW-0458">Lysosome</keyword>
<keyword id="KW-0645">Protease</keyword>
<keyword id="KW-1185">Reference proteome</keyword>
<keyword id="KW-0732">Signal</keyword>
<keyword id="KW-0865">Zymogen</keyword>
<gene>
    <name type="primary">ctsd</name>
</gene>